<gene>
    <name evidence="1" type="primary">groES5</name>
    <name evidence="1" type="synonym">groS5</name>
    <name type="ordered locus">msr9341</name>
</gene>
<reference key="1">
    <citation type="journal article" date="2000" name="DNA Res.">
        <title>Complete genome structure of the nitrogen-fixing symbiotic bacterium Mesorhizobium loti.</title>
        <authorList>
            <person name="Kaneko T."/>
            <person name="Nakamura Y."/>
            <person name="Sato S."/>
            <person name="Asamizu E."/>
            <person name="Kato T."/>
            <person name="Sasamoto S."/>
            <person name="Watanabe A."/>
            <person name="Idesawa K."/>
            <person name="Ishikawa A."/>
            <person name="Kawashima K."/>
            <person name="Kimura T."/>
            <person name="Kishida Y."/>
            <person name="Kiyokawa C."/>
            <person name="Kohara M."/>
            <person name="Matsumoto M."/>
            <person name="Matsuno A."/>
            <person name="Mochizuki Y."/>
            <person name="Nakayama S."/>
            <person name="Nakazaki N."/>
            <person name="Shimpo S."/>
            <person name="Sugimoto M."/>
            <person name="Takeuchi C."/>
            <person name="Yamada M."/>
            <person name="Tabata S."/>
        </authorList>
    </citation>
    <scope>NUCLEOTIDE SEQUENCE [LARGE SCALE GENOMIC DNA]</scope>
    <source>
        <strain>LMG 29417 / CECT 9101 / MAFF 303099</strain>
    </source>
</reference>
<name>CH105_RHILO</name>
<dbReference type="EMBL" id="BA000013">
    <property type="protein sequence ID" value="BAB54709.1"/>
    <property type="molecule type" value="Genomic_DNA"/>
</dbReference>
<dbReference type="SMR" id="Q981K0"/>
<dbReference type="KEGG" id="mlo:msr9341"/>
<dbReference type="HOGENOM" id="CLU_132825_2_0_5"/>
<dbReference type="Proteomes" id="UP000000552">
    <property type="component" value="Plasmid pMLa"/>
</dbReference>
<dbReference type="GO" id="GO:0005737">
    <property type="term" value="C:cytoplasm"/>
    <property type="evidence" value="ECO:0007669"/>
    <property type="project" value="UniProtKB-SubCell"/>
</dbReference>
<dbReference type="GO" id="GO:0005524">
    <property type="term" value="F:ATP binding"/>
    <property type="evidence" value="ECO:0007669"/>
    <property type="project" value="InterPro"/>
</dbReference>
<dbReference type="GO" id="GO:0046872">
    <property type="term" value="F:metal ion binding"/>
    <property type="evidence" value="ECO:0007669"/>
    <property type="project" value="TreeGrafter"/>
</dbReference>
<dbReference type="GO" id="GO:0044183">
    <property type="term" value="F:protein folding chaperone"/>
    <property type="evidence" value="ECO:0007669"/>
    <property type="project" value="InterPro"/>
</dbReference>
<dbReference type="GO" id="GO:0051087">
    <property type="term" value="F:protein-folding chaperone binding"/>
    <property type="evidence" value="ECO:0007669"/>
    <property type="project" value="TreeGrafter"/>
</dbReference>
<dbReference type="GO" id="GO:0051082">
    <property type="term" value="F:unfolded protein binding"/>
    <property type="evidence" value="ECO:0007669"/>
    <property type="project" value="TreeGrafter"/>
</dbReference>
<dbReference type="GO" id="GO:0051085">
    <property type="term" value="P:chaperone cofactor-dependent protein refolding"/>
    <property type="evidence" value="ECO:0007669"/>
    <property type="project" value="TreeGrafter"/>
</dbReference>
<dbReference type="CDD" id="cd00320">
    <property type="entry name" value="cpn10"/>
    <property type="match status" value="1"/>
</dbReference>
<dbReference type="FunFam" id="2.30.33.40:FF:000001">
    <property type="entry name" value="10 kDa chaperonin"/>
    <property type="match status" value="1"/>
</dbReference>
<dbReference type="Gene3D" id="2.30.33.40">
    <property type="entry name" value="GroES chaperonin"/>
    <property type="match status" value="1"/>
</dbReference>
<dbReference type="HAMAP" id="MF_00580">
    <property type="entry name" value="CH10"/>
    <property type="match status" value="1"/>
</dbReference>
<dbReference type="InterPro" id="IPR020818">
    <property type="entry name" value="Chaperonin_GroES"/>
</dbReference>
<dbReference type="InterPro" id="IPR037124">
    <property type="entry name" value="Chaperonin_GroES_sf"/>
</dbReference>
<dbReference type="InterPro" id="IPR018369">
    <property type="entry name" value="Chaprnonin_Cpn10_CS"/>
</dbReference>
<dbReference type="InterPro" id="IPR011032">
    <property type="entry name" value="GroES-like_sf"/>
</dbReference>
<dbReference type="NCBIfam" id="NF001527">
    <property type="entry name" value="PRK00364.1-2"/>
    <property type="match status" value="1"/>
</dbReference>
<dbReference type="NCBIfam" id="NF001529">
    <property type="entry name" value="PRK00364.1-5"/>
    <property type="match status" value="1"/>
</dbReference>
<dbReference type="NCBIfam" id="NF001531">
    <property type="entry name" value="PRK00364.2-2"/>
    <property type="match status" value="1"/>
</dbReference>
<dbReference type="NCBIfam" id="NF001533">
    <property type="entry name" value="PRK00364.2-4"/>
    <property type="match status" value="1"/>
</dbReference>
<dbReference type="NCBIfam" id="NF001534">
    <property type="entry name" value="PRK00364.2-5"/>
    <property type="match status" value="1"/>
</dbReference>
<dbReference type="PANTHER" id="PTHR10772">
    <property type="entry name" value="10 KDA HEAT SHOCK PROTEIN"/>
    <property type="match status" value="1"/>
</dbReference>
<dbReference type="PANTHER" id="PTHR10772:SF58">
    <property type="entry name" value="CO-CHAPERONIN GROES"/>
    <property type="match status" value="1"/>
</dbReference>
<dbReference type="Pfam" id="PF00166">
    <property type="entry name" value="Cpn10"/>
    <property type="match status" value="1"/>
</dbReference>
<dbReference type="PRINTS" id="PR00297">
    <property type="entry name" value="CHAPERONIN10"/>
</dbReference>
<dbReference type="SMART" id="SM00883">
    <property type="entry name" value="Cpn10"/>
    <property type="match status" value="1"/>
</dbReference>
<dbReference type="SUPFAM" id="SSF50129">
    <property type="entry name" value="GroES-like"/>
    <property type="match status" value="1"/>
</dbReference>
<dbReference type="PROSITE" id="PS00681">
    <property type="entry name" value="CHAPERONINS_CPN10"/>
    <property type="match status" value="1"/>
</dbReference>
<protein>
    <recommendedName>
        <fullName evidence="1">Co-chaperonin GroES 5</fullName>
    </recommendedName>
    <alternativeName>
        <fullName evidence="1">10 kDa chaperonin 5</fullName>
    </alternativeName>
    <alternativeName>
        <fullName evidence="1">Chaperonin-10 5</fullName>
        <shortName evidence="1">Cpn10 5</shortName>
    </alternativeName>
</protein>
<organism>
    <name type="scientific">Mesorhizobium japonicum (strain LMG 29417 / CECT 9101 / MAFF 303099)</name>
    <name type="common">Mesorhizobium loti (strain MAFF 303099)</name>
    <dbReference type="NCBI Taxonomy" id="266835"/>
    <lineage>
        <taxon>Bacteria</taxon>
        <taxon>Pseudomonadati</taxon>
        <taxon>Pseudomonadota</taxon>
        <taxon>Alphaproteobacteria</taxon>
        <taxon>Hyphomicrobiales</taxon>
        <taxon>Phyllobacteriaceae</taxon>
        <taxon>Mesorhizobium</taxon>
    </lineage>
</organism>
<accession>Q981K0</accession>
<sequence length="98" mass="10571">MAKSKFRPLHDRVVVRRVESESKTAGGIIIPDTAKEKPQEGEIIAVGSGARDEAGKLVPLDVKAGDRILFGKWSGTEVKLNGEDLLIMKESDIMGIIG</sequence>
<proteinExistence type="inferred from homology"/>
<comment type="function">
    <text evidence="1">Together with the chaperonin GroEL, plays an essential role in assisting protein folding. The GroEL-GroES system forms a nano-cage that allows encapsulation of the non-native substrate proteins and provides a physical environment optimized to promote and accelerate protein folding. GroES binds to the apical surface of the GroEL ring, thereby capping the opening of the GroEL channel.</text>
</comment>
<comment type="subunit">
    <text evidence="1">Heptamer of 7 subunits arranged in a ring. Interacts with the chaperonin GroEL.</text>
</comment>
<comment type="subcellular location">
    <subcellularLocation>
        <location evidence="1">Cytoplasm</location>
    </subcellularLocation>
</comment>
<comment type="similarity">
    <text evidence="1 2">Belongs to the GroES chaperonin family.</text>
</comment>
<geneLocation type="plasmid">
    <name>pMLa</name>
</geneLocation>
<evidence type="ECO:0000255" key="1">
    <source>
        <dbReference type="HAMAP-Rule" id="MF_00580"/>
    </source>
</evidence>
<evidence type="ECO:0000305" key="2"/>
<keyword id="KW-0143">Chaperone</keyword>
<keyword id="KW-0963">Cytoplasm</keyword>
<keyword id="KW-0614">Plasmid</keyword>
<feature type="chain" id="PRO_0000174816" description="Co-chaperonin GroES 5">
    <location>
        <begin position="1"/>
        <end position="98"/>
    </location>
</feature>